<reference key="1">
    <citation type="submission" date="2006-03" db="EMBL/GenBank/DDBJ databases">
        <title>Complete sequence of chromosome of Psychrobacter cryohalolentis K5.</title>
        <authorList>
            <consortium name="US DOE Joint Genome Institute"/>
            <person name="Copeland A."/>
            <person name="Lucas S."/>
            <person name="Lapidus A."/>
            <person name="Barry K."/>
            <person name="Detter J.C."/>
            <person name="Glavina T."/>
            <person name="Hammon N."/>
            <person name="Israni S."/>
            <person name="Dalin E."/>
            <person name="Tice H."/>
            <person name="Pitluck S."/>
            <person name="Brettin T."/>
            <person name="Bruce D."/>
            <person name="Han C."/>
            <person name="Tapia R."/>
            <person name="Sims D.R."/>
            <person name="Gilna P."/>
            <person name="Schmutz J."/>
            <person name="Larimer F."/>
            <person name="Land M."/>
            <person name="Hauser L."/>
            <person name="Kyrpides N."/>
            <person name="Kim E."/>
            <person name="Richardson P."/>
        </authorList>
    </citation>
    <scope>NUCLEOTIDE SEQUENCE [LARGE SCALE GENOMIC DNA]</scope>
    <source>
        <strain>ATCC BAA-1226 / DSM 17306 / VKM B-2378 / K5</strain>
    </source>
</reference>
<name>G6PI_PSYCK</name>
<keyword id="KW-0963">Cytoplasm</keyword>
<keyword id="KW-0312">Gluconeogenesis</keyword>
<keyword id="KW-0324">Glycolysis</keyword>
<keyword id="KW-0413">Isomerase</keyword>
<feature type="chain" id="PRO_0000252633" description="Glucose-6-phosphate isomerase">
    <location>
        <begin position="1"/>
        <end position="555"/>
    </location>
</feature>
<feature type="active site" description="Proton donor" evidence="1">
    <location>
        <position position="365"/>
    </location>
</feature>
<feature type="active site" evidence="1">
    <location>
        <position position="396"/>
    </location>
</feature>
<feature type="active site" evidence="1">
    <location>
        <position position="522"/>
    </location>
</feature>
<sequence length="555" mass="61432">MNDTKDNKVYSSARHSKYWQKLKAAAESKWSLAALFAQDNTRTQRFSAQSGALYMDYSKQCLDDTVLESLLNLANSCELSARIQALLQGAMVNTSEERAALHTALRLPTTANLQLDNQDVVADVHQSLGQVERLSERVRSGTWRGFSGKAITDVVNIGVGGSDLGPLMATTALDEWADTCVEVHFVSNMDGTQLDNLLKHLNPETTLFIISSKSFGTIDTLSNAKTALSWLLATAKLRAGTEDSVLRRHFIGISANSEKMSAWGIHPEHQLQLWEWVGGRFSLWSAIGLAIAIRIGMSGFKELLAGAHSMDEHFAQADFAENLPVLLGLIAVWNSTFLQVNAHTVLPYDGRLSYLPSYLTQLEMESNGKSVTQHGDRIDYDTCPILWGEIGSNAQHAFYQLLHQGTQQVSCDFIACVRRYSDKAKNTPLQQQHELSLANCLAQSRVLAFGNAAIAETDSQIACDADKYKYYRGNQPSTTLLIDELTPHSLGALIALYEHKVYVMASIWDINPFDQWGVEMGKQMAESVHDAMQQEGNAPFDTSTNQLLKHIKQLS</sequence>
<protein>
    <recommendedName>
        <fullName evidence="1">Glucose-6-phosphate isomerase</fullName>
        <shortName evidence="1">GPI</shortName>
        <ecNumber evidence="1">5.3.1.9</ecNumber>
    </recommendedName>
    <alternativeName>
        <fullName evidence="1">Phosphoglucose isomerase</fullName>
        <shortName evidence="1">PGI</shortName>
    </alternativeName>
    <alternativeName>
        <fullName evidence="1">Phosphohexose isomerase</fullName>
        <shortName evidence="1">PHI</shortName>
    </alternativeName>
</protein>
<evidence type="ECO:0000255" key="1">
    <source>
        <dbReference type="HAMAP-Rule" id="MF_00473"/>
    </source>
</evidence>
<gene>
    <name evidence="1" type="primary">pgi</name>
    <name type="ordered locus">Pcryo_0118</name>
</gene>
<proteinExistence type="inferred from homology"/>
<organism>
    <name type="scientific">Psychrobacter cryohalolentis (strain ATCC BAA-1226 / DSM 17306 / VKM B-2378 / K5)</name>
    <dbReference type="NCBI Taxonomy" id="335284"/>
    <lineage>
        <taxon>Bacteria</taxon>
        <taxon>Pseudomonadati</taxon>
        <taxon>Pseudomonadota</taxon>
        <taxon>Gammaproteobacteria</taxon>
        <taxon>Moraxellales</taxon>
        <taxon>Moraxellaceae</taxon>
        <taxon>Psychrobacter</taxon>
    </lineage>
</organism>
<accession>Q1QEK1</accession>
<dbReference type="EC" id="5.3.1.9" evidence="1"/>
<dbReference type="EMBL" id="CP000323">
    <property type="protein sequence ID" value="ABE73902.1"/>
    <property type="molecule type" value="Genomic_DNA"/>
</dbReference>
<dbReference type="RefSeq" id="WP_011512493.1">
    <property type="nucleotide sequence ID" value="NC_007969.1"/>
</dbReference>
<dbReference type="SMR" id="Q1QEK1"/>
<dbReference type="STRING" id="335284.Pcryo_0118"/>
<dbReference type="KEGG" id="pcr:Pcryo_0118"/>
<dbReference type="eggNOG" id="COG0166">
    <property type="taxonomic scope" value="Bacteria"/>
</dbReference>
<dbReference type="HOGENOM" id="CLU_017947_3_1_6"/>
<dbReference type="UniPathway" id="UPA00109">
    <property type="reaction ID" value="UER00181"/>
</dbReference>
<dbReference type="UniPathway" id="UPA00138"/>
<dbReference type="Proteomes" id="UP000002425">
    <property type="component" value="Chromosome"/>
</dbReference>
<dbReference type="GO" id="GO:0005829">
    <property type="term" value="C:cytosol"/>
    <property type="evidence" value="ECO:0007669"/>
    <property type="project" value="TreeGrafter"/>
</dbReference>
<dbReference type="GO" id="GO:0097367">
    <property type="term" value="F:carbohydrate derivative binding"/>
    <property type="evidence" value="ECO:0007669"/>
    <property type="project" value="InterPro"/>
</dbReference>
<dbReference type="GO" id="GO:0004347">
    <property type="term" value="F:glucose-6-phosphate isomerase activity"/>
    <property type="evidence" value="ECO:0007669"/>
    <property type="project" value="UniProtKB-UniRule"/>
</dbReference>
<dbReference type="GO" id="GO:0048029">
    <property type="term" value="F:monosaccharide binding"/>
    <property type="evidence" value="ECO:0007669"/>
    <property type="project" value="TreeGrafter"/>
</dbReference>
<dbReference type="GO" id="GO:0006094">
    <property type="term" value="P:gluconeogenesis"/>
    <property type="evidence" value="ECO:0007669"/>
    <property type="project" value="UniProtKB-UniRule"/>
</dbReference>
<dbReference type="GO" id="GO:0051156">
    <property type="term" value="P:glucose 6-phosphate metabolic process"/>
    <property type="evidence" value="ECO:0007669"/>
    <property type="project" value="TreeGrafter"/>
</dbReference>
<dbReference type="GO" id="GO:0006096">
    <property type="term" value="P:glycolytic process"/>
    <property type="evidence" value="ECO:0007669"/>
    <property type="project" value="UniProtKB-UniRule"/>
</dbReference>
<dbReference type="CDD" id="cd05015">
    <property type="entry name" value="SIS_PGI_1"/>
    <property type="match status" value="1"/>
</dbReference>
<dbReference type="CDD" id="cd05016">
    <property type="entry name" value="SIS_PGI_2"/>
    <property type="match status" value="1"/>
</dbReference>
<dbReference type="Gene3D" id="1.10.1390.10">
    <property type="match status" value="1"/>
</dbReference>
<dbReference type="Gene3D" id="3.40.50.10490">
    <property type="entry name" value="Glucose-6-phosphate isomerase like protein, domain 1"/>
    <property type="match status" value="2"/>
</dbReference>
<dbReference type="HAMAP" id="MF_00473">
    <property type="entry name" value="G6P_isomerase"/>
    <property type="match status" value="1"/>
</dbReference>
<dbReference type="InterPro" id="IPR001672">
    <property type="entry name" value="G6P_Isomerase"/>
</dbReference>
<dbReference type="InterPro" id="IPR023096">
    <property type="entry name" value="G6P_Isomerase_C"/>
</dbReference>
<dbReference type="InterPro" id="IPR018189">
    <property type="entry name" value="Phosphoglucose_isomerase_CS"/>
</dbReference>
<dbReference type="InterPro" id="IPR046348">
    <property type="entry name" value="SIS_dom_sf"/>
</dbReference>
<dbReference type="InterPro" id="IPR035476">
    <property type="entry name" value="SIS_PGI_1"/>
</dbReference>
<dbReference type="InterPro" id="IPR035482">
    <property type="entry name" value="SIS_PGI_2"/>
</dbReference>
<dbReference type="NCBIfam" id="NF001211">
    <property type="entry name" value="PRK00179.1"/>
    <property type="match status" value="1"/>
</dbReference>
<dbReference type="PANTHER" id="PTHR11469">
    <property type="entry name" value="GLUCOSE-6-PHOSPHATE ISOMERASE"/>
    <property type="match status" value="1"/>
</dbReference>
<dbReference type="PANTHER" id="PTHR11469:SF1">
    <property type="entry name" value="GLUCOSE-6-PHOSPHATE ISOMERASE"/>
    <property type="match status" value="1"/>
</dbReference>
<dbReference type="Pfam" id="PF00342">
    <property type="entry name" value="PGI"/>
    <property type="match status" value="1"/>
</dbReference>
<dbReference type="PRINTS" id="PR00662">
    <property type="entry name" value="G6PISOMERASE"/>
</dbReference>
<dbReference type="SUPFAM" id="SSF53697">
    <property type="entry name" value="SIS domain"/>
    <property type="match status" value="1"/>
</dbReference>
<dbReference type="PROSITE" id="PS00765">
    <property type="entry name" value="P_GLUCOSE_ISOMERASE_1"/>
    <property type="match status" value="1"/>
</dbReference>
<dbReference type="PROSITE" id="PS00174">
    <property type="entry name" value="P_GLUCOSE_ISOMERASE_2"/>
    <property type="match status" value="1"/>
</dbReference>
<dbReference type="PROSITE" id="PS51463">
    <property type="entry name" value="P_GLUCOSE_ISOMERASE_3"/>
    <property type="match status" value="1"/>
</dbReference>
<comment type="function">
    <text evidence="1">Catalyzes the reversible isomerization of glucose-6-phosphate to fructose-6-phosphate.</text>
</comment>
<comment type="catalytic activity">
    <reaction evidence="1">
        <text>alpha-D-glucose 6-phosphate = beta-D-fructose 6-phosphate</text>
        <dbReference type="Rhea" id="RHEA:11816"/>
        <dbReference type="ChEBI" id="CHEBI:57634"/>
        <dbReference type="ChEBI" id="CHEBI:58225"/>
        <dbReference type="EC" id="5.3.1.9"/>
    </reaction>
</comment>
<comment type="pathway">
    <text evidence="1">Carbohydrate biosynthesis; gluconeogenesis.</text>
</comment>
<comment type="pathway">
    <text evidence="1">Carbohydrate degradation; glycolysis; D-glyceraldehyde 3-phosphate and glycerone phosphate from D-glucose: step 2/4.</text>
</comment>
<comment type="subcellular location">
    <subcellularLocation>
        <location evidence="1">Cytoplasm</location>
    </subcellularLocation>
</comment>
<comment type="similarity">
    <text evidence="1">Belongs to the GPI family.</text>
</comment>